<name>TGAL7_ORYSJ</name>
<accession>Q6H434</accession>
<organism>
    <name type="scientific">Oryza sativa subsp. japonica</name>
    <name type="common">Rice</name>
    <dbReference type="NCBI Taxonomy" id="39947"/>
    <lineage>
        <taxon>Eukaryota</taxon>
        <taxon>Viridiplantae</taxon>
        <taxon>Streptophyta</taxon>
        <taxon>Embryophyta</taxon>
        <taxon>Tracheophyta</taxon>
        <taxon>Spermatophyta</taxon>
        <taxon>Magnoliopsida</taxon>
        <taxon>Liliopsida</taxon>
        <taxon>Poales</taxon>
        <taxon>Poaceae</taxon>
        <taxon>BOP clade</taxon>
        <taxon>Oryzoideae</taxon>
        <taxon>Oryzeae</taxon>
        <taxon>Oryzinae</taxon>
        <taxon>Oryza</taxon>
        <taxon>Oryza sativa</taxon>
    </lineage>
</organism>
<evidence type="ECO:0000250" key="1">
    <source>
        <dbReference type="UniProtKB" id="Q7X993"/>
    </source>
</evidence>
<evidence type="ECO:0000255" key="2">
    <source>
        <dbReference type="PROSITE-ProRule" id="PRU00978"/>
    </source>
</evidence>
<evidence type="ECO:0000255" key="3">
    <source>
        <dbReference type="PROSITE-ProRule" id="PRU01147"/>
    </source>
</evidence>
<evidence type="ECO:0000256" key="4">
    <source>
        <dbReference type="SAM" id="MobiDB-lite"/>
    </source>
</evidence>
<evidence type="ECO:0000269" key="5">
    <source>
    </source>
</evidence>
<evidence type="ECO:0000303" key="6">
    <source>
    </source>
</evidence>
<evidence type="ECO:0000303" key="7">
    <source>
    </source>
</evidence>
<evidence type="ECO:0000305" key="8"/>
<evidence type="ECO:0000312" key="9">
    <source>
        <dbReference type="EMBL" id="BAD26515.1"/>
    </source>
</evidence>
<evidence type="ECO:0000312" key="10">
    <source>
        <dbReference type="EMBL" id="BAF24679.1"/>
    </source>
</evidence>
<sequence length="467" mass="51343">MGGSREEDRQHHNHLPSELPLGFRSSSPTTMIASSSMSKESSNYDMADFDQASLFLYLDSHDQQSIQEQRQTLNIFPSQPMHVADPAHEAKSAGVAMAMLPNGNQLQVLPSHPSKKPDQQGGQKINSSVPTNPPGPNLPLPNSAKDNKNSSLIKKEGSSSGKGATTSNDPEREGRRTLDPKTLRRLAQNREAARKSRLRKKAYIQQLESSRIRLSQLEQQVHVARVQGAMLGAGDQHQGLPSGPSAASLFDLEYGRWVEEHSKLIFQLRAALNEQMADSQLQVFVNGAMAQHDELLSLKGAIARADIFHLLCGVWATPAERCFLWLGGFRPSEAIKVMLKQVEPLSEGQLMSIYELQQAAKGTEDALSHAMDGLQQSLSDTVAAPDVAAAGGFMGHMSLAMNKISAMEDIVRQADGLRQQTLHKLQHMLTIRQAARCFVAISDYFHRLRALSTLWVARPRPEEGPAM</sequence>
<keyword id="KW-0238">DNA-binding</keyword>
<keyword id="KW-0539">Nucleus</keyword>
<keyword id="KW-0611">Plant defense</keyword>
<keyword id="KW-1185">Reference proteome</keyword>
<keyword id="KW-0804">Transcription</keyword>
<keyword id="KW-0805">Transcription regulation</keyword>
<reference key="1">
    <citation type="journal article" date="2005" name="Nature">
        <title>The map-based sequence of the rice genome.</title>
        <authorList>
            <consortium name="International rice genome sequencing project (IRGSP)"/>
        </authorList>
    </citation>
    <scope>NUCLEOTIDE SEQUENCE [LARGE SCALE GENOMIC DNA]</scope>
    <source>
        <strain>cv. Nipponbare</strain>
    </source>
</reference>
<reference key="2">
    <citation type="journal article" date="2008" name="Nucleic Acids Res.">
        <title>The rice annotation project database (RAP-DB): 2008 update.</title>
        <authorList>
            <consortium name="The rice annotation project (RAP)"/>
        </authorList>
    </citation>
    <scope>GENOME REANNOTATION</scope>
    <source>
        <strain>cv. Nipponbare</strain>
    </source>
</reference>
<reference key="3">
    <citation type="journal article" date="2013" name="Rice">
        <title>Improvement of the Oryza sativa Nipponbare reference genome using next generation sequence and optical map data.</title>
        <authorList>
            <person name="Kawahara Y."/>
            <person name="de la Bastide M."/>
            <person name="Hamilton J.P."/>
            <person name="Kanamori H."/>
            <person name="McCombie W.R."/>
            <person name="Ouyang S."/>
            <person name="Schwartz D.C."/>
            <person name="Tanaka T."/>
            <person name="Wu J."/>
            <person name="Zhou S."/>
            <person name="Childs K.L."/>
            <person name="Davidson R.M."/>
            <person name="Lin H."/>
            <person name="Quesada-Ocampo L."/>
            <person name="Vaillancourt B."/>
            <person name="Sakai H."/>
            <person name="Lee S.S."/>
            <person name="Kim J."/>
            <person name="Numa H."/>
            <person name="Itoh T."/>
            <person name="Buell C.R."/>
            <person name="Matsumoto T."/>
        </authorList>
    </citation>
    <scope>GENOME REANNOTATION</scope>
    <source>
        <strain>cv. Nipponbare</strain>
    </source>
</reference>
<reference key="4">
    <citation type="journal article" date="2003" name="Science">
        <title>Collection, mapping, and annotation of over 28,000 cDNA clones from japonica rice.</title>
        <authorList>
            <consortium name="The rice full-length cDNA consortium"/>
        </authorList>
    </citation>
    <scope>NUCLEOTIDE SEQUENCE [LARGE SCALE MRNA]</scope>
    <source>
        <strain>cv. Nipponbare</strain>
    </source>
</reference>
<reference key="5">
    <citation type="journal article" date="2008" name="Plant Physiol.">
        <title>Genomic survey and gene expression analysis of the basic leucine zipper transcription factor family in rice.</title>
        <authorList>
            <person name="Nijhawan A."/>
            <person name="Jain M."/>
            <person name="Tyagi A.K."/>
            <person name="Khurana J.P."/>
        </authorList>
    </citation>
    <scope>GENE FAMILY</scope>
    <scope>NOMENCLATURE</scope>
</reference>
<reference key="6">
    <citation type="journal article" date="2014" name="BMC Genomics">
        <title>Interaction specificity and coexpression of rice NPR1 homologs 1 and 3 (NH1 and NH3), TGA transcription factors and negative regulator of resistance (NRR) proteins.</title>
        <authorList>
            <person name="Chern M."/>
            <person name="Bai W."/>
            <person name="Ruan D."/>
            <person name="Oh T."/>
            <person name="Chen X."/>
            <person name="Ronald P.C."/>
        </authorList>
    </citation>
    <scope>INTERACTION WITH NPR5/NH4; NH5.1 AND NH5.2</scope>
</reference>
<dbReference type="EMBL" id="AP006528">
    <property type="protein sequence ID" value="BAD26515.1"/>
    <property type="molecule type" value="Genomic_DNA"/>
</dbReference>
<dbReference type="EMBL" id="AP008215">
    <property type="protein sequence ID" value="BAF24679.1"/>
    <property type="molecule type" value="Genomic_DNA"/>
</dbReference>
<dbReference type="EMBL" id="AP014965">
    <property type="protein sequence ID" value="BAT07221.1"/>
    <property type="molecule type" value="Genomic_DNA"/>
</dbReference>
<dbReference type="EMBL" id="AK106988">
    <property type="status" value="NOT_ANNOTATED_CDS"/>
    <property type="molecule type" value="mRNA"/>
</dbReference>
<dbReference type="RefSeq" id="XP_015651203.1">
    <property type="nucleotide sequence ID" value="XM_015795717.1"/>
</dbReference>
<dbReference type="SMR" id="Q6H434"/>
<dbReference type="STRING" id="39947.Q6H434"/>
<dbReference type="PaxDb" id="39947-Q6H434"/>
<dbReference type="EnsemblPlants" id="Os09t0280500-01">
    <property type="protein sequence ID" value="Os09t0280500-01"/>
    <property type="gene ID" value="Os09g0280500"/>
</dbReference>
<dbReference type="Gramene" id="Os09t0280500-01">
    <property type="protein sequence ID" value="Os09t0280500-01"/>
    <property type="gene ID" value="Os09g0280500"/>
</dbReference>
<dbReference type="KEGG" id="dosa:Os09g0280500"/>
<dbReference type="eggNOG" id="ENOG502QU32">
    <property type="taxonomic scope" value="Eukaryota"/>
</dbReference>
<dbReference type="HOGENOM" id="CLU_024782_0_2_1"/>
<dbReference type="InParanoid" id="Q6H434"/>
<dbReference type="OMA" id="GAMAQHD"/>
<dbReference type="OrthoDB" id="2015618at2759"/>
<dbReference type="Proteomes" id="UP000000763">
    <property type="component" value="Chromosome 9"/>
</dbReference>
<dbReference type="Proteomes" id="UP000059680">
    <property type="component" value="Chromosome 9"/>
</dbReference>
<dbReference type="GO" id="GO:0005634">
    <property type="term" value="C:nucleus"/>
    <property type="evidence" value="ECO:0007669"/>
    <property type="project" value="UniProtKB-SubCell"/>
</dbReference>
<dbReference type="GO" id="GO:0003700">
    <property type="term" value="F:DNA-binding transcription factor activity"/>
    <property type="evidence" value="ECO:0007669"/>
    <property type="project" value="InterPro"/>
</dbReference>
<dbReference type="GO" id="GO:0043565">
    <property type="term" value="F:sequence-specific DNA binding"/>
    <property type="evidence" value="ECO:0007669"/>
    <property type="project" value="InterPro"/>
</dbReference>
<dbReference type="GO" id="GO:0006952">
    <property type="term" value="P:defense response"/>
    <property type="evidence" value="ECO:0007669"/>
    <property type="project" value="UniProtKB-KW"/>
</dbReference>
<dbReference type="GO" id="GO:0006351">
    <property type="term" value="P:DNA-templated transcription"/>
    <property type="evidence" value="ECO:0007669"/>
    <property type="project" value="InterPro"/>
</dbReference>
<dbReference type="FunFam" id="1.20.5.170:FF:000019">
    <property type="entry name" value="BZIP family transcription factor"/>
    <property type="match status" value="1"/>
</dbReference>
<dbReference type="Gene3D" id="1.20.5.170">
    <property type="match status" value="1"/>
</dbReference>
<dbReference type="InterPro" id="IPR004827">
    <property type="entry name" value="bZIP"/>
</dbReference>
<dbReference type="InterPro" id="IPR046347">
    <property type="entry name" value="bZIP_sf"/>
</dbReference>
<dbReference type="InterPro" id="IPR025422">
    <property type="entry name" value="TGA_domain"/>
</dbReference>
<dbReference type="PANTHER" id="PTHR45693">
    <property type="entry name" value="TRANSCRIPTION FACTOR TGA9"/>
    <property type="match status" value="1"/>
</dbReference>
<dbReference type="PANTHER" id="PTHR45693:SF11">
    <property type="entry name" value="TRANSCRIPTION FACTOR TGAL7"/>
    <property type="match status" value="1"/>
</dbReference>
<dbReference type="Pfam" id="PF00170">
    <property type="entry name" value="bZIP_1"/>
    <property type="match status" value="1"/>
</dbReference>
<dbReference type="Pfam" id="PF14144">
    <property type="entry name" value="DOG1"/>
    <property type="match status" value="1"/>
</dbReference>
<dbReference type="SMART" id="SM00338">
    <property type="entry name" value="BRLZ"/>
    <property type="match status" value="1"/>
</dbReference>
<dbReference type="SUPFAM" id="SSF57959">
    <property type="entry name" value="Leucine zipper domain"/>
    <property type="match status" value="1"/>
</dbReference>
<dbReference type="PROSITE" id="PS50217">
    <property type="entry name" value="BZIP"/>
    <property type="match status" value="1"/>
</dbReference>
<dbReference type="PROSITE" id="PS00036">
    <property type="entry name" value="BZIP_BASIC"/>
    <property type="match status" value="1"/>
</dbReference>
<dbReference type="PROSITE" id="PS51806">
    <property type="entry name" value="DOG1"/>
    <property type="match status" value="1"/>
</dbReference>
<proteinExistence type="evidence at protein level"/>
<feature type="chain" id="PRO_0000437021" description="Transcription factor TGAL7">
    <location>
        <begin position="1"/>
        <end position="467"/>
    </location>
</feature>
<feature type="domain" description="bZIP" evidence="2">
    <location>
        <begin position="179"/>
        <end position="223"/>
    </location>
</feature>
<feature type="domain" description="DOG1" evidence="3">
    <location>
        <begin position="247"/>
        <end position="458"/>
    </location>
</feature>
<feature type="region of interest" description="Disordered" evidence="4">
    <location>
        <begin position="1"/>
        <end position="42"/>
    </location>
</feature>
<feature type="region of interest" description="Disordered" evidence="4">
    <location>
        <begin position="105"/>
        <end position="184"/>
    </location>
</feature>
<feature type="region of interest" description="Basic motif" evidence="2">
    <location>
        <begin position="181"/>
        <end position="201"/>
    </location>
</feature>
<feature type="region of interest" description="Leucine-zipper" evidence="2">
    <location>
        <begin position="207"/>
        <end position="221"/>
    </location>
</feature>
<feature type="compositionally biased region" description="Basic and acidic residues" evidence="4">
    <location>
        <begin position="1"/>
        <end position="10"/>
    </location>
</feature>
<feature type="compositionally biased region" description="Low complexity" evidence="4">
    <location>
        <begin position="25"/>
        <end position="41"/>
    </location>
</feature>
<feature type="compositionally biased region" description="Polar residues" evidence="4">
    <location>
        <begin position="120"/>
        <end position="129"/>
    </location>
</feature>
<feature type="compositionally biased region" description="Basic and acidic residues" evidence="4">
    <location>
        <begin position="145"/>
        <end position="157"/>
    </location>
</feature>
<feature type="compositionally biased region" description="Polar residues" evidence="4">
    <location>
        <begin position="158"/>
        <end position="168"/>
    </location>
</feature>
<feature type="compositionally biased region" description="Basic and acidic residues" evidence="4">
    <location>
        <begin position="169"/>
        <end position="182"/>
    </location>
</feature>
<gene>
    <name evidence="7" type="primary">TGAL7</name>
    <name evidence="10" type="ordered locus">Os09g0280500</name>
    <name evidence="8" type="ordered locus">LOC_Os09g10840</name>
    <name evidence="9" type="ORF">P0651G05.17</name>
</gene>
<protein>
    <recommendedName>
        <fullName evidence="8">Transcription factor TGAL7</fullName>
    </recommendedName>
    <alternativeName>
        <fullName evidence="6">bZIP transcription factor 70</fullName>
        <shortName evidence="6">OsbZIP70</shortName>
    </alternativeName>
</protein>
<comment type="function">
    <text evidence="1">Transcriptional regulator involved in defense response.</text>
</comment>
<comment type="subunit">
    <text evidence="5">Interacts with NPR5/NH4, NH5.1 and NH5.2.</text>
</comment>
<comment type="subcellular location">
    <subcellularLocation>
        <location evidence="2">Nucleus</location>
    </subcellularLocation>
</comment>
<comment type="similarity">
    <text evidence="8">Belongs to the bZIP family.</text>
</comment>